<gene>
    <name evidence="1" type="primary">upp</name>
    <name type="ordered locus">SERP1718</name>
</gene>
<proteinExistence type="inferred from homology"/>
<comment type="function">
    <text evidence="1">Catalyzes the conversion of uracil and 5-phospho-alpha-D-ribose 1-diphosphate (PRPP) to UMP and diphosphate.</text>
</comment>
<comment type="catalytic activity">
    <reaction evidence="1">
        <text>UMP + diphosphate = 5-phospho-alpha-D-ribose 1-diphosphate + uracil</text>
        <dbReference type="Rhea" id="RHEA:13017"/>
        <dbReference type="ChEBI" id="CHEBI:17568"/>
        <dbReference type="ChEBI" id="CHEBI:33019"/>
        <dbReference type="ChEBI" id="CHEBI:57865"/>
        <dbReference type="ChEBI" id="CHEBI:58017"/>
        <dbReference type="EC" id="2.4.2.9"/>
    </reaction>
</comment>
<comment type="cofactor">
    <cofactor evidence="1">
        <name>Mg(2+)</name>
        <dbReference type="ChEBI" id="CHEBI:18420"/>
    </cofactor>
    <text evidence="1">Binds 1 Mg(2+) ion per subunit. The magnesium is bound as Mg-PRPP.</text>
</comment>
<comment type="activity regulation">
    <text evidence="1">Allosterically activated by GTP.</text>
</comment>
<comment type="pathway">
    <text evidence="1">Pyrimidine metabolism; UMP biosynthesis via salvage pathway; UMP from uracil: step 1/1.</text>
</comment>
<comment type="similarity">
    <text evidence="1">Belongs to the UPRTase family.</text>
</comment>
<accession>Q5HMB1</accession>
<name>UPP_STAEQ</name>
<organism>
    <name type="scientific">Staphylococcus epidermidis (strain ATCC 35984 / DSM 28319 / BCRC 17069 / CCUG 31568 / BM 3577 / RP62A)</name>
    <dbReference type="NCBI Taxonomy" id="176279"/>
    <lineage>
        <taxon>Bacteria</taxon>
        <taxon>Bacillati</taxon>
        <taxon>Bacillota</taxon>
        <taxon>Bacilli</taxon>
        <taxon>Bacillales</taxon>
        <taxon>Staphylococcaceae</taxon>
        <taxon>Staphylococcus</taxon>
    </lineage>
</organism>
<sequence>MSKVHVFDHPLIQHKLSYIRDARTGTKEFRELVDEVGMLMAYEVTRDLELQDVEIQTPVTKMTAKRLAGKKLAIVPILRAGLGMTDGVLSLVPAARVGHIGLYRDPETLEAVEYFAKMPQDIDERQIIVVDPMLATGASAIEAISSLKKRGAKSIRFMCLIAAPEGVEKMQEAHPDVDIYIAALDEKLNDKAYITPGLGDAGDRLFGTK</sequence>
<keyword id="KW-0021">Allosteric enzyme</keyword>
<keyword id="KW-0328">Glycosyltransferase</keyword>
<keyword id="KW-0342">GTP-binding</keyword>
<keyword id="KW-0460">Magnesium</keyword>
<keyword id="KW-0547">Nucleotide-binding</keyword>
<keyword id="KW-1185">Reference proteome</keyword>
<keyword id="KW-0808">Transferase</keyword>
<protein>
    <recommendedName>
        <fullName evidence="1">Uracil phosphoribosyltransferase</fullName>
        <ecNumber evidence="1">2.4.2.9</ecNumber>
    </recommendedName>
    <alternativeName>
        <fullName evidence="1">UMP pyrophosphorylase</fullName>
    </alternativeName>
    <alternativeName>
        <fullName evidence="1">UPRTase</fullName>
    </alternativeName>
</protein>
<feature type="chain" id="PRO_0000120886" description="Uracil phosphoribosyltransferase">
    <location>
        <begin position="1"/>
        <end position="209"/>
    </location>
</feature>
<feature type="binding site" evidence="1">
    <location>
        <position position="79"/>
    </location>
    <ligand>
        <name>5-phospho-alpha-D-ribose 1-diphosphate</name>
        <dbReference type="ChEBI" id="CHEBI:58017"/>
    </ligand>
</feature>
<feature type="binding site" evidence="1">
    <location>
        <position position="104"/>
    </location>
    <ligand>
        <name>5-phospho-alpha-D-ribose 1-diphosphate</name>
        <dbReference type="ChEBI" id="CHEBI:58017"/>
    </ligand>
</feature>
<feature type="binding site" evidence="1">
    <location>
        <begin position="131"/>
        <end position="139"/>
    </location>
    <ligand>
        <name>5-phospho-alpha-D-ribose 1-diphosphate</name>
        <dbReference type="ChEBI" id="CHEBI:58017"/>
    </ligand>
</feature>
<feature type="binding site" evidence="1">
    <location>
        <position position="194"/>
    </location>
    <ligand>
        <name>uracil</name>
        <dbReference type="ChEBI" id="CHEBI:17568"/>
    </ligand>
</feature>
<feature type="binding site" evidence="1">
    <location>
        <begin position="199"/>
        <end position="201"/>
    </location>
    <ligand>
        <name>uracil</name>
        <dbReference type="ChEBI" id="CHEBI:17568"/>
    </ligand>
</feature>
<feature type="binding site" evidence="1">
    <location>
        <position position="200"/>
    </location>
    <ligand>
        <name>5-phospho-alpha-D-ribose 1-diphosphate</name>
        <dbReference type="ChEBI" id="CHEBI:58017"/>
    </ligand>
</feature>
<evidence type="ECO:0000255" key="1">
    <source>
        <dbReference type="HAMAP-Rule" id="MF_01218"/>
    </source>
</evidence>
<reference key="1">
    <citation type="journal article" date="2005" name="J. Bacteriol.">
        <title>Insights on evolution of virulence and resistance from the complete genome analysis of an early methicillin-resistant Staphylococcus aureus strain and a biofilm-producing methicillin-resistant Staphylococcus epidermidis strain.</title>
        <authorList>
            <person name="Gill S.R."/>
            <person name="Fouts D.E."/>
            <person name="Archer G.L."/>
            <person name="Mongodin E.F."/>
            <person name="DeBoy R.T."/>
            <person name="Ravel J."/>
            <person name="Paulsen I.T."/>
            <person name="Kolonay J.F."/>
            <person name="Brinkac L.M."/>
            <person name="Beanan M.J."/>
            <person name="Dodson R.J."/>
            <person name="Daugherty S.C."/>
            <person name="Madupu R."/>
            <person name="Angiuoli S.V."/>
            <person name="Durkin A.S."/>
            <person name="Haft D.H."/>
            <person name="Vamathevan J.J."/>
            <person name="Khouri H."/>
            <person name="Utterback T.R."/>
            <person name="Lee C."/>
            <person name="Dimitrov G."/>
            <person name="Jiang L."/>
            <person name="Qin H."/>
            <person name="Weidman J."/>
            <person name="Tran K."/>
            <person name="Kang K.H."/>
            <person name="Hance I.R."/>
            <person name="Nelson K.E."/>
            <person name="Fraser C.M."/>
        </authorList>
    </citation>
    <scope>NUCLEOTIDE SEQUENCE [LARGE SCALE GENOMIC DNA]</scope>
    <source>
        <strain>ATCC 35984 / DSM 28319 / BCRC 17069 / CCUG 31568 / BM 3577 / RP62A</strain>
    </source>
</reference>
<dbReference type="EC" id="2.4.2.9" evidence="1"/>
<dbReference type="EMBL" id="CP000029">
    <property type="protein sequence ID" value="AAW55110.1"/>
    <property type="molecule type" value="Genomic_DNA"/>
</dbReference>
<dbReference type="RefSeq" id="WP_001829916.1">
    <property type="nucleotide sequence ID" value="NC_002976.3"/>
</dbReference>
<dbReference type="SMR" id="Q5HMB1"/>
<dbReference type="STRING" id="176279.SERP1718"/>
<dbReference type="GeneID" id="50018190"/>
<dbReference type="KEGG" id="ser:SERP1718"/>
<dbReference type="eggNOG" id="COG0035">
    <property type="taxonomic scope" value="Bacteria"/>
</dbReference>
<dbReference type="HOGENOM" id="CLU_067096_2_2_9"/>
<dbReference type="UniPathway" id="UPA00574">
    <property type="reaction ID" value="UER00636"/>
</dbReference>
<dbReference type="Proteomes" id="UP000000531">
    <property type="component" value="Chromosome"/>
</dbReference>
<dbReference type="GO" id="GO:0005525">
    <property type="term" value="F:GTP binding"/>
    <property type="evidence" value="ECO:0007669"/>
    <property type="project" value="UniProtKB-KW"/>
</dbReference>
<dbReference type="GO" id="GO:0000287">
    <property type="term" value="F:magnesium ion binding"/>
    <property type="evidence" value="ECO:0007669"/>
    <property type="project" value="UniProtKB-UniRule"/>
</dbReference>
<dbReference type="GO" id="GO:0004845">
    <property type="term" value="F:uracil phosphoribosyltransferase activity"/>
    <property type="evidence" value="ECO:0007669"/>
    <property type="project" value="UniProtKB-UniRule"/>
</dbReference>
<dbReference type="GO" id="GO:0044206">
    <property type="term" value="P:UMP salvage"/>
    <property type="evidence" value="ECO:0007669"/>
    <property type="project" value="UniProtKB-UniRule"/>
</dbReference>
<dbReference type="GO" id="GO:0006223">
    <property type="term" value="P:uracil salvage"/>
    <property type="evidence" value="ECO:0007669"/>
    <property type="project" value="InterPro"/>
</dbReference>
<dbReference type="CDD" id="cd06223">
    <property type="entry name" value="PRTases_typeI"/>
    <property type="match status" value="1"/>
</dbReference>
<dbReference type="FunFam" id="3.40.50.2020:FF:000003">
    <property type="entry name" value="Uracil phosphoribosyltransferase"/>
    <property type="match status" value="1"/>
</dbReference>
<dbReference type="Gene3D" id="3.40.50.2020">
    <property type="match status" value="1"/>
</dbReference>
<dbReference type="HAMAP" id="MF_01218_B">
    <property type="entry name" value="Upp_B"/>
    <property type="match status" value="1"/>
</dbReference>
<dbReference type="InterPro" id="IPR000836">
    <property type="entry name" value="PRibTrfase_dom"/>
</dbReference>
<dbReference type="InterPro" id="IPR029057">
    <property type="entry name" value="PRTase-like"/>
</dbReference>
<dbReference type="InterPro" id="IPR034332">
    <property type="entry name" value="Upp_B"/>
</dbReference>
<dbReference type="InterPro" id="IPR050054">
    <property type="entry name" value="UPRTase/APRTase"/>
</dbReference>
<dbReference type="InterPro" id="IPR005765">
    <property type="entry name" value="Ura_phspho_trans"/>
</dbReference>
<dbReference type="NCBIfam" id="NF001097">
    <property type="entry name" value="PRK00129.1"/>
    <property type="match status" value="1"/>
</dbReference>
<dbReference type="NCBIfam" id="TIGR01091">
    <property type="entry name" value="upp"/>
    <property type="match status" value="1"/>
</dbReference>
<dbReference type="PANTHER" id="PTHR32315">
    <property type="entry name" value="ADENINE PHOSPHORIBOSYLTRANSFERASE"/>
    <property type="match status" value="1"/>
</dbReference>
<dbReference type="PANTHER" id="PTHR32315:SF4">
    <property type="entry name" value="URACIL PHOSPHORIBOSYLTRANSFERASE, CHLOROPLASTIC"/>
    <property type="match status" value="1"/>
</dbReference>
<dbReference type="Pfam" id="PF14681">
    <property type="entry name" value="UPRTase"/>
    <property type="match status" value="1"/>
</dbReference>
<dbReference type="SUPFAM" id="SSF53271">
    <property type="entry name" value="PRTase-like"/>
    <property type="match status" value="1"/>
</dbReference>